<sequence>MTPYRPEFSAAEQSRIDAEFSRLARNKTVYLDHAGTTLYAENQVTAAAEQLQRNVICNPHTCRLTGDFVDQVRFKILEFFNTTAEDYHVIFTANATAALSLVAENFDFGSSGDFHFCQENHTSVLGMRERVRANGIYMLREKEISGGGAKENGTVHQVSGKTGNSLVTFSAQCNFSGYKIPLDSIEKIQNYGLSKPGKQLWSALGDKKEHTHNDYYICLDAASFVATSPLDLRKYRPDYVCLSFYKIFGYPTGVGALLVSRRGAEVFQKRRFFGGGTINYAFPHAMDYQLRETFHQRYEDGTLPFLSIVGLLEGFRTLERLVPKTDEFSTMERISRHVFGLAKYVEDQLRQLQHPNGEPLVELYNKVGYQDKARQGGIVAFNVRTESGSFVGFGEIACVAALHGILLRTGCFCNIGACQYYLGLDEDALDSIYKRAGRICGDYFDLVDGQPTGAVRVSFGYMTTIQDVEQLLQMLRSSYLATKPLQRIQFIEEQAEQLPPLLKERVQLLRPKLLQMAIYPVKSCAAFKIESPGSWPLTDQGLKYDREWMIVDMNGMALTQKRCTELCLIRPVIKVDQLELQFGDNSHFSVPLSLEDQAADSAKCVSKVCRQPVEGLDCGDAVAQWLSENLGLEGLRLLRQSGQRNSSKDQQKLSLVNQAQFLLLNRSSVRSLQFEEPLDETVDRFRANIIIDTGSAFEELTYKALSIGGIQFQVEGPCQRCDMICINQRTGERSPETLTTISRLQKGRMRFGIYITRIPPDTKDLEPKEQHMTCGDVVIVE</sequence>
<organism>
    <name type="scientific">Drosophila erecta</name>
    <name type="common">Fruit fly</name>
    <dbReference type="NCBI Taxonomy" id="7220"/>
    <lineage>
        <taxon>Eukaryota</taxon>
        <taxon>Metazoa</taxon>
        <taxon>Ecdysozoa</taxon>
        <taxon>Arthropoda</taxon>
        <taxon>Hexapoda</taxon>
        <taxon>Insecta</taxon>
        <taxon>Pterygota</taxon>
        <taxon>Neoptera</taxon>
        <taxon>Endopterygota</taxon>
        <taxon>Diptera</taxon>
        <taxon>Brachycera</taxon>
        <taxon>Muscomorpha</taxon>
        <taxon>Ephydroidea</taxon>
        <taxon>Drosophilidae</taxon>
        <taxon>Drosophila</taxon>
        <taxon>Sophophora</taxon>
    </lineage>
</organism>
<keyword id="KW-0501">Molybdenum cofactor biosynthesis</keyword>
<keyword id="KW-0597">Phosphoprotein</keyword>
<keyword id="KW-0663">Pyridoxal phosphate</keyword>
<keyword id="KW-0808">Transferase</keyword>
<proteinExistence type="inferred from homology"/>
<feature type="chain" id="PRO_0000369371" description="Molybdenum cofactor sulfurase">
    <location>
        <begin position="1"/>
        <end position="781"/>
    </location>
</feature>
<feature type="domain" description="MOSC" evidence="3">
    <location>
        <begin position="619"/>
        <end position="781"/>
    </location>
</feature>
<feature type="active site" evidence="3">
    <location>
        <position position="413"/>
    </location>
</feature>
<feature type="modified residue" description="N6-(pyridoxal phosphate)lysine" evidence="3">
    <location>
        <position position="246"/>
    </location>
</feature>
<feature type="modified residue" description="Phosphoserine" evidence="1">
    <location>
        <position position="734"/>
    </location>
</feature>
<comment type="function">
    <text evidence="3">Sulfurates the molybdenum cofactor. Sulfation of molybdenum is essential for xanthine dehydrogenase (XDH) and aldehyde oxidase (ADO) enzymes in which molybdenum cofactor is liganded by 1 oxygen and 1 sulfur atom in active form.</text>
</comment>
<comment type="catalytic activity">
    <reaction evidence="3">
        <text>Mo-molybdopterin + L-cysteine + AH2 = thio-Mo-molybdopterin + L-alanine + A + H2O</text>
        <dbReference type="Rhea" id="RHEA:42636"/>
        <dbReference type="ChEBI" id="CHEBI:13193"/>
        <dbReference type="ChEBI" id="CHEBI:15377"/>
        <dbReference type="ChEBI" id="CHEBI:17499"/>
        <dbReference type="ChEBI" id="CHEBI:35235"/>
        <dbReference type="ChEBI" id="CHEBI:57972"/>
        <dbReference type="ChEBI" id="CHEBI:71302"/>
        <dbReference type="ChEBI" id="CHEBI:82685"/>
        <dbReference type="EC" id="2.8.1.9"/>
    </reaction>
</comment>
<comment type="cofactor">
    <cofactor evidence="3">
        <name>pyridoxal 5'-phosphate</name>
        <dbReference type="ChEBI" id="CHEBI:597326"/>
    </cofactor>
</comment>
<comment type="pathway">
    <text evidence="2">Cofactor biosynthesis; molybdopterin biosynthesis.</text>
</comment>
<comment type="similarity">
    <text evidence="3">Belongs to the class-V pyridoxal-phosphate-dependent aminotransferase family. MOCOS subfamily.</text>
</comment>
<name>MOCOS_DROER</name>
<dbReference type="EC" id="2.8.1.9" evidence="3"/>
<dbReference type="EMBL" id="CH954180">
    <property type="protein sequence ID" value="EDV47540.1"/>
    <property type="molecule type" value="Genomic_DNA"/>
</dbReference>
<dbReference type="SMR" id="B3NY19"/>
<dbReference type="EnsemblMetazoa" id="FBtr0139738">
    <property type="protein sequence ID" value="FBpp0138230"/>
    <property type="gene ID" value="FBgn0111886"/>
</dbReference>
<dbReference type="EnsemblMetazoa" id="XM_001978577.3">
    <property type="protein sequence ID" value="XP_001978613.1"/>
    <property type="gene ID" value="LOC6549751"/>
</dbReference>
<dbReference type="GeneID" id="6549751"/>
<dbReference type="KEGG" id="der:6549751"/>
<dbReference type="CTD" id="4118"/>
<dbReference type="eggNOG" id="KOG2142">
    <property type="taxonomic scope" value="Eukaryota"/>
</dbReference>
<dbReference type="HOGENOM" id="CLU_010913_0_1_1"/>
<dbReference type="OMA" id="PCTRCQM"/>
<dbReference type="OrthoDB" id="420046at2759"/>
<dbReference type="PhylomeDB" id="B3NY19"/>
<dbReference type="UniPathway" id="UPA00344"/>
<dbReference type="Proteomes" id="UP000008711">
    <property type="component" value="Unassembled WGS sequence"/>
</dbReference>
<dbReference type="GO" id="GO:0016829">
    <property type="term" value="F:lyase activity"/>
    <property type="evidence" value="ECO:0007669"/>
    <property type="project" value="UniProtKB-UniRule"/>
</dbReference>
<dbReference type="GO" id="GO:0008265">
    <property type="term" value="F:molybdenum cofactor sulfurtransferase activity"/>
    <property type="evidence" value="ECO:0000250"/>
    <property type="project" value="UniProtKB"/>
</dbReference>
<dbReference type="GO" id="GO:0030151">
    <property type="term" value="F:molybdenum ion binding"/>
    <property type="evidence" value="ECO:0007669"/>
    <property type="project" value="UniProtKB-UniRule"/>
</dbReference>
<dbReference type="GO" id="GO:0030170">
    <property type="term" value="F:pyridoxal phosphate binding"/>
    <property type="evidence" value="ECO:0007669"/>
    <property type="project" value="UniProtKB-UniRule"/>
</dbReference>
<dbReference type="GO" id="GO:0006777">
    <property type="term" value="P:Mo-molybdopterin cofactor biosynthetic process"/>
    <property type="evidence" value="ECO:0007669"/>
    <property type="project" value="UniProtKB-UniRule"/>
</dbReference>
<dbReference type="GO" id="GO:0043545">
    <property type="term" value="P:molybdopterin cofactor metabolic process"/>
    <property type="evidence" value="ECO:0000250"/>
    <property type="project" value="UniProtKB"/>
</dbReference>
<dbReference type="FunFam" id="3.40.640.10:FF:000119">
    <property type="entry name" value="Molybdenum cofactor sulfurase"/>
    <property type="match status" value="1"/>
</dbReference>
<dbReference type="FunFam" id="3.90.1150.10:FF:000079">
    <property type="entry name" value="Molybdenum cofactor sulfurase"/>
    <property type="match status" value="1"/>
</dbReference>
<dbReference type="Gene3D" id="3.90.1150.10">
    <property type="entry name" value="Aspartate Aminotransferase, domain 1"/>
    <property type="match status" value="1"/>
</dbReference>
<dbReference type="Gene3D" id="3.40.640.10">
    <property type="entry name" value="Type I PLP-dependent aspartate aminotransferase-like (Major domain)"/>
    <property type="match status" value="1"/>
</dbReference>
<dbReference type="HAMAP" id="MF_03050">
    <property type="entry name" value="MOCOS"/>
    <property type="match status" value="1"/>
</dbReference>
<dbReference type="InterPro" id="IPR000192">
    <property type="entry name" value="Aminotrans_V_dom"/>
</dbReference>
<dbReference type="InterPro" id="IPR005302">
    <property type="entry name" value="MoCF_Sase_C"/>
</dbReference>
<dbReference type="InterPro" id="IPR028886">
    <property type="entry name" value="MoCo_sulfurase"/>
</dbReference>
<dbReference type="InterPro" id="IPR005303">
    <property type="entry name" value="MOCOS_middle"/>
</dbReference>
<dbReference type="InterPro" id="IPR015424">
    <property type="entry name" value="PyrdxlP-dep_Trfase"/>
</dbReference>
<dbReference type="InterPro" id="IPR015421">
    <property type="entry name" value="PyrdxlP-dep_Trfase_major"/>
</dbReference>
<dbReference type="InterPro" id="IPR015422">
    <property type="entry name" value="PyrdxlP-dep_Trfase_small"/>
</dbReference>
<dbReference type="InterPro" id="IPR011037">
    <property type="entry name" value="Pyrv_Knase-like_insert_dom_sf"/>
</dbReference>
<dbReference type="PANTHER" id="PTHR14237:SF19">
    <property type="entry name" value="MITOCHONDRIAL AMIDOXIME REDUCING COMPONENT 1"/>
    <property type="match status" value="1"/>
</dbReference>
<dbReference type="PANTHER" id="PTHR14237">
    <property type="entry name" value="MOLYBDOPTERIN COFACTOR SULFURASE MOSC"/>
    <property type="match status" value="1"/>
</dbReference>
<dbReference type="Pfam" id="PF00266">
    <property type="entry name" value="Aminotran_5"/>
    <property type="match status" value="2"/>
</dbReference>
<dbReference type="Pfam" id="PF03473">
    <property type="entry name" value="MOSC"/>
    <property type="match status" value="1"/>
</dbReference>
<dbReference type="Pfam" id="PF03476">
    <property type="entry name" value="MOSC_N"/>
    <property type="match status" value="1"/>
</dbReference>
<dbReference type="SUPFAM" id="SSF141673">
    <property type="entry name" value="MOSC N-terminal domain-like"/>
    <property type="match status" value="1"/>
</dbReference>
<dbReference type="SUPFAM" id="SSF50800">
    <property type="entry name" value="PK beta-barrel domain-like"/>
    <property type="match status" value="1"/>
</dbReference>
<dbReference type="SUPFAM" id="SSF53383">
    <property type="entry name" value="PLP-dependent transferases"/>
    <property type="match status" value="1"/>
</dbReference>
<dbReference type="PROSITE" id="PS51340">
    <property type="entry name" value="MOSC"/>
    <property type="match status" value="1"/>
</dbReference>
<accession>B3NY19</accession>
<protein>
    <recommendedName>
        <fullName evidence="3">Molybdenum cofactor sulfurase</fullName>
        <shortName evidence="3">MCS</shortName>
        <shortName evidence="3">MOS</shortName>
        <shortName evidence="3">MoCo sulfurase</shortName>
        <ecNumber evidence="3">2.8.1.9</ecNumber>
    </recommendedName>
    <alternativeName>
        <fullName evidence="3">Molybdenum cofactor sulfurtransferase</fullName>
    </alternativeName>
    <alternativeName>
        <fullName evidence="3">Protein maroon-like</fullName>
        <shortName evidence="3">Ma-l</shortName>
    </alternativeName>
</protein>
<gene>
    <name evidence="3" type="primary">mal</name>
    <name type="ORF">GG19684</name>
</gene>
<evidence type="ECO:0000250" key="1"/>
<evidence type="ECO:0000250" key="2">
    <source>
        <dbReference type="UniProtKB" id="Q96EN8"/>
    </source>
</evidence>
<evidence type="ECO:0000255" key="3">
    <source>
        <dbReference type="HAMAP-Rule" id="MF_03050"/>
    </source>
</evidence>
<reference key="1">
    <citation type="journal article" date="2007" name="Nature">
        <title>Evolution of genes and genomes on the Drosophila phylogeny.</title>
        <authorList>
            <consortium name="Drosophila 12 genomes consortium"/>
        </authorList>
    </citation>
    <scope>NUCLEOTIDE SEQUENCE [LARGE SCALE GENOMIC DNA]</scope>
    <source>
        <strain>Tucson 14021-0224.01</strain>
    </source>
</reference>